<sequence>MDKQLLETTVSKVLDEMRERPIPLGVSNRHIHLSAEDYARLFPGQPISEKKALLQPGQYAADQTVTLIGPKGQLKNVRLLGPLRRTSQVEISRTDARTLGIAAPLRMSGDLKGTPGIRLVSPFAELDLASGVIVAQRHIHMSPLDALIFRVAHGDKVSVAIEGNARRLIFDNVAIRVSADMRLEMHIDTDEANAAGADSPDAFATLVTPR</sequence>
<gene>
    <name type="primary">pduL</name>
    <name type="ordered locus">CKO_00789</name>
</gene>
<dbReference type="EC" id="2.3.1.222"/>
<dbReference type="EMBL" id="CP000822">
    <property type="protein sequence ID" value="ABV11941.1"/>
    <property type="molecule type" value="Genomic_DNA"/>
</dbReference>
<dbReference type="RefSeq" id="WP_012131764.1">
    <property type="nucleotide sequence ID" value="NC_009792.1"/>
</dbReference>
<dbReference type="SMR" id="A8AEM8"/>
<dbReference type="STRING" id="290338.CKO_00789"/>
<dbReference type="GeneID" id="45134988"/>
<dbReference type="KEGG" id="cko:CKO_00789"/>
<dbReference type="HOGENOM" id="CLU_080676_1_0_6"/>
<dbReference type="OrthoDB" id="9784365at2"/>
<dbReference type="UniPathway" id="UPA00621"/>
<dbReference type="Proteomes" id="UP000008148">
    <property type="component" value="Chromosome"/>
</dbReference>
<dbReference type="GO" id="GO:0031469">
    <property type="term" value="C:bacterial microcompartment"/>
    <property type="evidence" value="ECO:0007669"/>
    <property type="project" value="UniProtKB-SubCell"/>
</dbReference>
<dbReference type="GO" id="GO:0016747">
    <property type="term" value="F:acyltransferase activity, transferring groups other than amino-acyl groups"/>
    <property type="evidence" value="ECO:0007669"/>
    <property type="project" value="InterPro"/>
</dbReference>
<dbReference type="GO" id="GO:0046872">
    <property type="term" value="F:metal ion binding"/>
    <property type="evidence" value="ECO:0007669"/>
    <property type="project" value="UniProtKB-KW"/>
</dbReference>
<dbReference type="GO" id="GO:0051144">
    <property type="term" value="P:propanediol catabolic process"/>
    <property type="evidence" value="ECO:0007669"/>
    <property type="project" value="UniProtKB-UniPathway"/>
</dbReference>
<dbReference type="InterPro" id="IPR008300">
    <property type="entry name" value="PTAC"/>
</dbReference>
<dbReference type="NCBIfam" id="NF011652">
    <property type="entry name" value="PRK15070.1"/>
    <property type="match status" value="1"/>
</dbReference>
<dbReference type="PANTHER" id="PTHR39453">
    <property type="entry name" value="PHOSPHATE PROPANOYLTRANSFERASE"/>
    <property type="match status" value="1"/>
</dbReference>
<dbReference type="PANTHER" id="PTHR39453:SF1">
    <property type="entry name" value="PHOSPHATE PROPANOYLTRANSFERASE"/>
    <property type="match status" value="1"/>
</dbReference>
<dbReference type="Pfam" id="PF06130">
    <property type="entry name" value="PTAC"/>
    <property type="match status" value="1"/>
</dbReference>
<dbReference type="PIRSF" id="PIRSF010130">
    <property type="entry name" value="PduL"/>
    <property type="match status" value="1"/>
</dbReference>
<name>PDUL_CITK8</name>
<comment type="function">
    <text evidence="2">Involved in 1,2-propanediol (1,2-PD) utilization within the bacterial microcompartment (BMC) dedicated to 1,2-PD degradation by catalyzing the conversion of propanoyl-CoA to propanoyl-phosphate.</text>
</comment>
<comment type="catalytic activity">
    <reaction evidence="2">
        <text>propanoyl-CoA + phosphate = propanoyl phosphate + CoA</text>
        <dbReference type="Rhea" id="RHEA:28046"/>
        <dbReference type="ChEBI" id="CHEBI:43474"/>
        <dbReference type="ChEBI" id="CHEBI:57287"/>
        <dbReference type="ChEBI" id="CHEBI:57392"/>
        <dbReference type="ChEBI" id="CHEBI:58933"/>
        <dbReference type="EC" id="2.3.1.222"/>
    </reaction>
</comment>
<comment type="cofactor">
    <cofactor evidence="1">
        <name>Zn(2+)</name>
        <dbReference type="ChEBI" id="CHEBI:29105"/>
    </cofactor>
    <text evidence="1">There are 2 Zn(2+) ions per monomer; Zn(2+) and CoA bind inbetween the 2 domains in each monomer.</text>
</comment>
<comment type="pathway">
    <text>Polyol metabolism; 1,2-propanediol degradation.</text>
</comment>
<comment type="subcellular location">
    <subcellularLocation>
        <location evidence="2">Bacterial microcompartment</location>
    </subcellularLocation>
</comment>
<comment type="domain">
    <text evidence="1">Formed by 2 beta-barrels, each is capped on both ends by short alpha-helices.</text>
</comment>
<comment type="similarity">
    <text evidence="3">Belongs to the PduL family.</text>
</comment>
<evidence type="ECO:0000250" key="1">
    <source>
        <dbReference type="UniProtKB" id="Q21A54"/>
    </source>
</evidence>
<evidence type="ECO:0000250" key="2">
    <source>
        <dbReference type="UniProtKB" id="Q9XDN5"/>
    </source>
</evidence>
<evidence type="ECO:0000305" key="3"/>
<keyword id="KW-0012">Acyltransferase</keyword>
<keyword id="KW-1283">Bacterial microcompartment</keyword>
<keyword id="KW-0479">Metal-binding</keyword>
<keyword id="KW-1185">Reference proteome</keyword>
<keyword id="KW-0808">Transferase</keyword>
<keyword id="KW-0862">Zinc</keyword>
<organism>
    <name type="scientific">Citrobacter koseri (strain ATCC BAA-895 / CDC 4225-83 / SGSC4696)</name>
    <dbReference type="NCBI Taxonomy" id="290338"/>
    <lineage>
        <taxon>Bacteria</taxon>
        <taxon>Pseudomonadati</taxon>
        <taxon>Pseudomonadota</taxon>
        <taxon>Gammaproteobacteria</taxon>
        <taxon>Enterobacterales</taxon>
        <taxon>Enterobacteriaceae</taxon>
        <taxon>Citrobacter</taxon>
    </lineage>
</organism>
<accession>A8AEM8</accession>
<feature type="chain" id="PRO_0000407699" description="Phosphate propanoyltransferase">
    <location>
        <begin position="1"/>
        <end position="210"/>
    </location>
</feature>
<feature type="binding site" evidence="1">
    <location>
        <begin position="26"/>
        <end position="28"/>
    </location>
    <ligand>
        <name>CoA</name>
        <dbReference type="ChEBI" id="CHEBI:57287"/>
    </ligand>
</feature>
<feature type="binding site" evidence="1">
    <location>
        <position position="30"/>
    </location>
    <ligand>
        <name>Zn(2+)</name>
        <dbReference type="ChEBI" id="CHEBI:29105"/>
        <label>1</label>
    </ligand>
</feature>
<feature type="binding site" evidence="1">
    <location>
        <position position="32"/>
    </location>
    <ligand>
        <name>Zn(2+)</name>
        <dbReference type="ChEBI" id="CHEBI:29105"/>
        <label>1</label>
    </ligand>
</feature>
<feature type="binding site" evidence="1">
    <location>
        <position position="71"/>
    </location>
    <ligand>
        <name>CoA</name>
        <dbReference type="ChEBI" id="CHEBI:57287"/>
    </ligand>
</feature>
<feature type="binding site" evidence="1">
    <location>
        <position position="78"/>
    </location>
    <ligand>
        <name>CoA</name>
        <dbReference type="ChEBI" id="CHEBI:57287"/>
    </ligand>
</feature>
<feature type="binding site" evidence="1">
    <location>
        <position position="84"/>
    </location>
    <ligand>
        <name>phosphate</name>
        <dbReference type="ChEBI" id="CHEBI:43474"/>
    </ligand>
</feature>
<feature type="binding site" evidence="1">
    <location>
        <position position="90"/>
    </location>
    <ligand>
        <name>Zn(2+)</name>
        <dbReference type="ChEBI" id="CHEBI:29105"/>
        <label>1</label>
    </ligand>
</feature>
<feature type="binding site" evidence="1">
    <location>
        <position position="138"/>
    </location>
    <ligand>
        <name>Zn(2+)</name>
        <dbReference type="ChEBI" id="CHEBI:29105"/>
        <label>2</label>
    </ligand>
</feature>
<feature type="binding site" evidence="1">
    <location>
        <position position="140"/>
    </location>
    <ligand>
        <name>Zn(2+)</name>
        <dbReference type="ChEBI" id="CHEBI:29105"/>
        <label>2</label>
    </ligand>
</feature>
<feature type="binding site" evidence="1">
    <location>
        <position position="186"/>
    </location>
    <ligand>
        <name>Zn(2+)</name>
        <dbReference type="ChEBI" id="CHEBI:29105"/>
        <label>2</label>
    </ligand>
</feature>
<feature type="binding site" evidence="1">
    <location>
        <position position="193"/>
    </location>
    <ligand>
        <name>CoA</name>
        <dbReference type="ChEBI" id="CHEBI:57287"/>
    </ligand>
</feature>
<proteinExistence type="inferred from homology"/>
<reference key="1">
    <citation type="submission" date="2007-08" db="EMBL/GenBank/DDBJ databases">
        <authorList>
            <consortium name="The Citrobacter koseri Genome Sequencing Project"/>
            <person name="McClelland M."/>
            <person name="Sanderson E.K."/>
            <person name="Porwollik S."/>
            <person name="Spieth J."/>
            <person name="Clifton W.S."/>
            <person name="Latreille P."/>
            <person name="Courtney L."/>
            <person name="Wang C."/>
            <person name="Pepin K."/>
            <person name="Bhonagiri V."/>
            <person name="Nash W."/>
            <person name="Johnson M."/>
            <person name="Thiruvilangam P."/>
            <person name="Wilson R."/>
        </authorList>
    </citation>
    <scope>NUCLEOTIDE SEQUENCE [LARGE SCALE GENOMIC DNA]</scope>
    <source>
        <strain>ATCC BAA-895 / CDC 4225-83 / SGSC4696</strain>
    </source>
</reference>
<protein>
    <recommendedName>
        <fullName>Phosphate propanoyltransferase</fullName>
        <ecNumber>2.3.1.222</ecNumber>
    </recommendedName>
    <alternativeName>
        <fullName>Phosphate acyltransferase PduL</fullName>
    </alternativeName>
    <alternativeName>
        <fullName>Phosphotransacylase PduL</fullName>
        <shortName>PTAC</shortName>
    </alternativeName>
    <alternativeName>
        <fullName>Propanediol utilization protein PduL</fullName>
    </alternativeName>
</protein>